<accession>C1KX54</accession>
<reference key="1">
    <citation type="journal article" date="2012" name="BMC Genomics">
        <title>Comparative genomics and transcriptomics of lineages I, II, and III strains of Listeria monocytogenes.</title>
        <authorList>
            <person name="Hain T."/>
            <person name="Ghai R."/>
            <person name="Billion A."/>
            <person name="Kuenne C.T."/>
            <person name="Steinweg C."/>
            <person name="Izar B."/>
            <person name="Mohamed W."/>
            <person name="Mraheil M."/>
            <person name="Domann E."/>
            <person name="Schaffrath S."/>
            <person name="Karst U."/>
            <person name="Goesmann A."/>
            <person name="Oehm S."/>
            <person name="Puhler A."/>
            <person name="Merkl R."/>
            <person name="Vorwerk S."/>
            <person name="Glaser P."/>
            <person name="Garrido P."/>
            <person name="Rusniok C."/>
            <person name="Buchrieser C."/>
            <person name="Goebel W."/>
            <person name="Chakraborty T."/>
        </authorList>
    </citation>
    <scope>NUCLEOTIDE SEQUENCE [LARGE SCALE GENOMIC DNA]</scope>
    <source>
        <strain>CLIP80459</strain>
    </source>
</reference>
<organism>
    <name type="scientific">Listeria monocytogenes serotype 4b (strain CLIP80459)</name>
    <dbReference type="NCBI Taxonomy" id="568819"/>
    <lineage>
        <taxon>Bacteria</taxon>
        <taxon>Bacillati</taxon>
        <taxon>Bacillota</taxon>
        <taxon>Bacilli</taxon>
        <taxon>Bacillales</taxon>
        <taxon>Listeriaceae</taxon>
        <taxon>Listeria</taxon>
    </lineage>
</organism>
<dbReference type="EC" id="4.3.3.6" evidence="1"/>
<dbReference type="EC" id="3.5.1.2" evidence="1"/>
<dbReference type="EMBL" id="FM242711">
    <property type="protein sequence ID" value="CAS05883.1"/>
    <property type="molecule type" value="Genomic_DNA"/>
</dbReference>
<dbReference type="RefSeq" id="WP_003724529.1">
    <property type="nucleotide sequence ID" value="NC_012488.1"/>
</dbReference>
<dbReference type="SMR" id="C1KX54"/>
<dbReference type="KEGG" id="lmc:Lm4b_02123"/>
<dbReference type="HOGENOM" id="CLU_069674_2_0_9"/>
<dbReference type="UniPathway" id="UPA00245"/>
<dbReference type="GO" id="GO:0005829">
    <property type="term" value="C:cytosol"/>
    <property type="evidence" value="ECO:0007669"/>
    <property type="project" value="TreeGrafter"/>
</dbReference>
<dbReference type="GO" id="GO:1903600">
    <property type="term" value="C:glutaminase complex"/>
    <property type="evidence" value="ECO:0007669"/>
    <property type="project" value="TreeGrafter"/>
</dbReference>
<dbReference type="GO" id="GO:0004359">
    <property type="term" value="F:glutaminase activity"/>
    <property type="evidence" value="ECO:0007669"/>
    <property type="project" value="UniProtKB-UniRule"/>
</dbReference>
<dbReference type="GO" id="GO:0036381">
    <property type="term" value="F:pyridoxal 5'-phosphate synthase (glutamine hydrolysing) activity"/>
    <property type="evidence" value="ECO:0007669"/>
    <property type="project" value="UniProtKB-UniRule"/>
</dbReference>
<dbReference type="GO" id="GO:0006543">
    <property type="term" value="P:glutamine catabolic process"/>
    <property type="evidence" value="ECO:0007669"/>
    <property type="project" value="UniProtKB-UniRule"/>
</dbReference>
<dbReference type="GO" id="GO:0042823">
    <property type="term" value="P:pyridoxal phosphate biosynthetic process"/>
    <property type="evidence" value="ECO:0007669"/>
    <property type="project" value="UniProtKB-UniRule"/>
</dbReference>
<dbReference type="GO" id="GO:0008614">
    <property type="term" value="P:pyridoxine metabolic process"/>
    <property type="evidence" value="ECO:0007669"/>
    <property type="project" value="TreeGrafter"/>
</dbReference>
<dbReference type="CDD" id="cd01749">
    <property type="entry name" value="GATase1_PB"/>
    <property type="match status" value="1"/>
</dbReference>
<dbReference type="FunFam" id="3.40.50.880:FF:000010">
    <property type="entry name" value="uncharacterized protein LOC100176842 isoform X2"/>
    <property type="match status" value="1"/>
</dbReference>
<dbReference type="Gene3D" id="3.40.50.880">
    <property type="match status" value="1"/>
</dbReference>
<dbReference type="HAMAP" id="MF_01615">
    <property type="entry name" value="PdxT"/>
    <property type="match status" value="1"/>
</dbReference>
<dbReference type="InterPro" id="IPR029062">
    <property type="entry name" value="Class_I_gatase-like"/>
</dbReference>
<dbReference type="InterPro" id="IPR002161">
    <property type="entry name" value="PdxT/SNO"/>
</dbReference>
<dbReference type="InterPro" id="IPR021196">
    <property type="entry name" value="PdxT/SNO_CS"/>
</dbReference>
<dbReference type="NCBIfam" id="TIGR03800">
    <property type="entry name" value="PLP_synth_Pdx2"/>
    <property type="match status" value="1"/>
</dbReference>
<dbReference type="PANTHER" id="PTHR31559">
    <property type="entry name" value="PYRIDOXAL 5'-PHOSPHATE SYNTHASE SUBUNIT SNO"/>
    <property type="match status" value="1"/>
</dbReference>
<dbReference type="PANTHER" id="PTHR31559:SF0">
    <property type="entry name" value="PYRIDOXAL 5'-PHOSPHATE SYNTHASE SUBUNIT SNO1-RELATED"/>
    <property type="match status" value="1"/>
</dbReference>
<dbReference type="Pfam" id="PF01174">
    <property type="entry name" value="SNO"/>
    <property type="match status" value="1"/>
</dbReference>
<dbReference type="PIRSF" id="PIRSF005639">
    <property type="entry name" value="Glut_amidoT_SNO"/>
    <property type="match status" value="1"/>
</dbReference>
<dbReference type="SUPFAM" id="SSF52317">
    <property type="entry name" value="Class I glutamine amidotransferase-like"/>
    <property type="match status" value="1"/>
</dbReference>
<dbReference type="PROSITE" id="PS01236">
    <property type="entry name" value="PDXT_SNO_1"/>
    <property type="match status" value="1"/>
</dbReference>
<dbReference type="PROSITE" id="PS51130">
    <property type="entry name" value="PDXT_SNO_2"/>
    <property type="match status" value="1"/>
</dbReference>
<evidence type="ECO:0000255" key="1">
    <source>
        <dbReference type="HAMAP-Rule" id="MF_01615"/>
    </source>
</evidence>
<keyword id="KW-0315">Glutamine amidotransferase</keyword>
<keyword id="KW-0378">Hydrolase</keyword>
<keyword id="KW-0456">Lyase</keyword>
<keyword id="KW-0663">Pyridoxal phosphate</keyword>
<feature type="chain" id="PRO_1000215717" description="Pyridoxal 5'-phosphate synthase subunit PdxT">
    <location>
        <begin position="1"/>
        <end position="188"/>
    </location>
</feature>
<feature type="active site" description="Nucleophile" evidence="1">
    <location>
        <position position="79"/>
    </location>
</feature>
<feature type="active site" description="Charge relay system" evidence="1">
    <location>
        <position position="170"/>
    </location>
</feature>
<feature type="active site" description="Charge relay system" evidence="1">
    <location>
        <position position="172"/>
    </location>
</feature>
<feature type="binding site" evidence="1">
    <location>
        <begin position="47"/>
        <end position="49"/>
    </location>
    <ligand>
        <name>L-glutamine</name>
        <dbReference type="ChEBI" id="CHEBI:58359"/>
    </ligand>
</feature>
<feature type="binding site" evidence="1">
    <location>
        <position position="105"/>
    </location>
    <ligand>
        <name>L-glutamine</name>
        <dbReference type="ChEBI" id="CHEBI:58359"/>
    </ligand>
</feature>
<feature type="binding site" evidence="1">
    <location>
        <begin position="134"/>
        <end position="135"/>
    </location>
    <ligand>
        <name>L-glutamine</name>
        <dbReference type="ChEBI" id="CHEBI:58359"/>
    </ligand>
</feature>
<name>PDXT_LISMC</name>
<gene>
    <name evidence="1" type="primary">pdxT</name>
    <name type="ordered locus">Lm4b_02123</name>
</gene>
<comment type="function">
    <text evidence="1">Catalyzes the hydrolysis of glutamine to glutamate and ammonia as part of the biosynthesis of pyridoxal 5'-phosphate. The resulting ammonia molecule is channeled to the active site of PdxS.</text>
</comment>
<comment type="catalytic activity">
    <reaction evidence="1">
        <text>aldehydo-D-ribose 5-phosphate + D-glyceraldehyde 3-phosphate + L-glutamine = pyridoxal 5'-phosphate + L-glutamate + phosphate + 3 H2O + H(+)</text>
        <dbReference type="Rhea" id="RHEA:31507"/>
        <dbReference type="ChEBI" id="CHEBI:15377"/>
        <dbReference type="ChEBI" id="CHEBI:15378"/>
        <dbReference type="ChEBI" id="CHEBI:29985"/>
        <dbReference type="ChEBI" id="CHEBI:43474"/>
        <dbReference type="ChEBI" id="CHEBI:58273"/>
        <dbReference type="ChEBI" id="CHEBI:58359"/>
        <dbReference type="ChEBI" id="CHEBI:59776"/>
        <dbReference type="ChEBI" id="CHEBI:597326"/>
        <dbReference type="EC" id="4.3.3.6"/>
    </reaction>
</comment>
<comment type="catalytic activity">
    <reaction evidence="1">
        <text>L-glutamine + H2O = L-glutamate + NH4(+)</text>
        <dbReference type="Rhea" id="RHEA:15889"/>
        <dbReference type="ChEBI" id="CHEBI:15377"/>
        <dbReference type="ChEBI" id="CHEBI:28938"/>
        <dbReference type="ChEBI" id="CHEBI:29985"/>
        <dbReference type="ChEBI" id="CHEBI:58359"/>
        <dbReference type="EC" id="3.5.1.2"/>
    </reaction>
</comment>
<comment type="pathway">
    <text evidence="1">Cofactor biosynthesis; pyridoxal 5'-phosphate biosynthesis.</text>
</comment>
<comment type="subunit">
    <text evidence="1">In the presence of PdxS, forms a dodecamer of heterodimers. Only shows activity in the heterodimer.</text>
</comment>
<comment type="similarity">
    <text evidence="1">Belongs to the glutaminase PdxT/SNO family.</text>
</comment>
<sequence length="188" mass="20574">MKKIGVLAIQGAVDEHIQMIESAGALAFKVKHSSDLDGLDGLVLPGGESTTMRKIMKRYDLMEPIRAFASEGKAIFGTCAGLVLLSKEIEGGEESLGLIEATAIRNGFGRQKESFEAELNIEAFGEPAFEAIFIRAPYLIEPSNEVAVLATVENRIVAAKQANILVTAFHPELTNDNRWMNYFLEKMV</sequence>
<proteinExistence type="inferred from homology"/>
<protein>
    <recommendedName>
        <fullName evidence="1">Pyridoxal 5'-phosphate synthase subunit PdxT</fullName>
        <ecNumber evidence="1">4.3.3.6</ecNumber>
    </recommendedName>
    <alternativeName>
        <fullName evidence="1">Pdx2</fullName>
    </alternativeName>
    <alternativeName>
        <fullName evidence="1">Pyridoxal 5'-phosphate synthase glutaminase subunit</fullName>
        <ecNumber evidence="1">3.5.1.2</ecNumber>
    </alternativeName>
</protein>